<name>DPPB_ECOL6</name>
<feature type="chain" id="PRO_0000060007" description="Dipeptide transport system permease protein DppB">
    <location>
        <begin position="1"/>
        <end position="339"/>
    </location>
</feature>
<feature type="topological domain" description="Periplasmic" evidence="2">
    <location>
        <begin position="1"/>
        <end position="9"/>
    </location>
</feature>
<feature type="transmembrane region" description="Helical" evidence="3">
    <location>
        <begin position="10"/>
        <end position="30"/>
    </location>
</feature>
<feature type="topological domain" description="Cytoplasmic" evidence="2">
    <location>
        <begin position="31"/>
        <end position="102"/>
    </location>
</feature>
<feature type="transmembrane region" description="Helical" evidence="3">
    <location>
        <begin position="103"/>
        <end position="123"/>
    </location>
</feature>
<feature type="topological domain" description="Periplasmic" evidence="2">
    <location>
        <begin position="124"/>
        <end position="135"/>
    </location>
</feature>
<feature type="transmembrane region" description="Helical" evidence="3">
    <location>
        <begin position="136"/>
        <end position="156"/>
    </location>
</feature>
<feature type="topological domain" description="Cytoplasmic" evidence="2">
    <location>
        <begin position="157"/>
        <end position="171"/>
    </location>
</feature>
<feature type="transmembrane region" description="Helical" evidence="3">
    <location>
        <begin position="172"/>
        <end position="192"/>
    </location>
</feature>
<feature type="topological domain" description="Periplasmic" evidence="2">
    <location>
        <begin position="193"/>
        <end position="200"/>
    </location>
</feature>
<feature type="transmembrane region" description="Helical" evidence="3">
    <location>
        <begin position="201"/>
        <end position="221"/>
    </location>
</feature>
<feature type="topological domain" description="Cytoplasmic" evidence="2">
    <location>
        <begin position="222"/>
        <end position="259"/>
    </location>
</feature>
<feature type="transmembrane region" description="Helical" evidence="3">
    <location>
        <begin position="260"/>
        <end position="280"/>
    </location>
</feature>
<feature type="topological domain" description="Periplasmic" evidence="2">
    <location>
        <begin position="281"/>
        <end position="309"/>
    </location>
</feature>
<feature type="transmembrane region" description="Helical" evidence="3">
    <location>
        <begin position="310"/>
        <end position="330"/>
    </location>
</feature>
<feature type="topological domain" description="Cytoplasmic" evidence="2">
    <location>
        <begin position="331"/>
        <end position="339"/>
    </location>
</feature>
<feature type="domain" description="ABC transmembrane type-1" evidence="3">
    <location>
        <begin position="96"/>
        <end position="328"/>
    </location>
</feature>
<reference key="1">
    <citation type="journal article" date="2002" name="Proc. Natl. Acad. Sci. U.S.A.">
        <title>Extensive mosaic structure revealed by the complete genome sequence of uropathogenic Escherichia coli.</title>
        <authorList>
            <person name="Welch R.A."/>
            <person name="Burland V."/>
            <person name="Plunkett G. III"/>
            <person name="Redford P."/>
            <person name="Roesch P."/>
            <person name="Rasko D."/>
            <person name="Buckles E.L."/>
            <person name="Liou S.-R."/>
            <person name="Boutin A."/>
            <person name="Hackett J."/>
            <person name="Stroud D."/>
            <person name="Mayhew G.F."/>
            <person name="Rose D.J."/>
            <person name="Zhou S."/>
            <person name="Schwartz D.C."/>
            <person name="Perna N.T."/>
            <person name="Mobley H.L.T."/>
            <person name="Donnenberg M.S."/>
            <person name="Blattner F.R."/>
        </authorList>
    </citation>
    <scope>NUCLEOTIDE SEQUENCE [LARGE SCALE GENOMIC DNA]</scope>
    <source>
        <strain>CFT073 / ATCC 700928 / UPEC</strain>
    </source>
</reference>
<organism>
    <name type="scientific">Escherichia coli O6:H1 (strain CFT073 / ATCC 700928 / UPEC)</name>
    <dbReference type="NCBI Taxonomy" id="199310"/>
    <lineage>
        <taxon>Bacteria</taxon>
        <taxon>Pseudomonadati</taxon>
        <taxon>Pseudomonadota</taxon>
        <taxon>Gammaproteobacteria</taxon>
        <taxon>Enterobacterales</taxon>
        <taxon>Enterobacteriaceae</taxon>
        <taxon>Escherichia</taxon>
    </lineage>
</organism>
<sequence>MLQFILRRLGLVIPTFIGITLLTFAFVHMIPGDPVMIMAGERGISPERHAQLLAELGLDKPMWQQYLHYIWGVMHGDLGISMKSRIPVWEEFVPRFQATLELGVCAMIFATAVGIPVGVLAAVKRGSIFDHTAVGLALTGYSMPIFWWGMMLIMLVSVHWNLTPVSGRVSDMVFLDDSNPLTGFMLIDTAIWGEDGNFIDAVAHMILPAIVLGTIPLAVIVRMTRSSMLEVLGEDYIRTARAKGLTRMRVIIVHALRNAMLPVVTVIGLQVGTLLAGAILTETIFSWPGLGRWLIDALQRRDYPVVQGGVLLVATMIILVNLLVDLLYGVVNPRIRHKK</sequence>
<comment type="function">
    <text evidence="1">Part of the ABC transporter DppABCDF involved in dipeptide transport. Responsible for the translocation of the substrate across the membrane.</text>
</comment>
<comment type="subunit">
    <text evidence="1">The complex is composed of two ATP-binding proteins (DppD and DppF), two transmembrane proteins (DppB and DppC) and a solute-binding protein (DppA).</text>
</comment>
<comment type="subcellular location">
    <subcellularLocation>
        <location evidence="1">Cell inner membrane</location>
        <topology evidence="2">Multi-pass membrane protein</topology>
    </subcellularLocation>
</comment>
<comment type="similarity">
    <text evidence="4">Belongs to the binding-protein-dependent transport system permease family. OppBC subfamily.</text>
</comment>
<evidence type="ECO:0000250" key="1">
    <source>
        <dbReference type="UniProtKB" id="P0AEF8"/>
    </source>
</evidence>
<evidence type="ECO:0000255" key="2"/>
<evidence type="ECO:0000255" key="3">
    <source>
        <dbReference type="PROSITE-ProRule" id="PRU00441"/>
    </source>
</evidence>
<evidence type="ECO:0000305" key="4"/>
<accession>P0AEF9</accession>
<accession>P37316</accession>
<keyword id="KW-0997">Cell inner membrane</keyword>
<keyword id="KW-1003">Cell membrane</keyword>
<keyword id="KW-0472">Membrane</keyword>
<keyword id="KW-0571">Peptide transport</keyword>
<keyword id="KW-0653">Protein transport</keyword>
<keyword id="KW-1185">Reference proteome</keyword>
<keyword id="KW-0812">Transmembrane</keyword>
<keyword id="KW-1133">Transmembrane helix</keyword>
<keyword id="KW-0813">Transport</keyword>
<proteinExistence type="inferred from homology"/>
<dbReference type="EMBL" id="AE014075">
    <property type="protein sequence ID" value="AAN82794.1"/>
    <property type="molecule type" value="Genomic_DNA"/>
</dbReference>
<dbReference type="RefSeq" id="WP_000938855.1">
    <property type="nucleotide sequence ID" value="NZ_CP051263.1"/>
</dbReference>
<dbReference type="SMR" id="P0AEF9"/>
<dbReference type="STRING" id="199310.c4358"/>
<dbReference type="GeneID" id="93778271"/>
<dbReference type="KEGG" id="ecc:c4358"/>
<dbReference type="eggNOG" id="COG0601">
    <property type="taxonomic scope" value="Bacteria"/>
</dbReference>
<dbReference type="HOGENOM" id="CLU_036879_0_0_6"/>
<dbReference type="BioCyc" id="ECOL199310:C4358-MONOMER"/>
<dbReference type="Proteomes" id="UP000001410">
    <property type="component" value="Chromosome"/>
</dbReference>
<dbReference type="GO" id="GO:0005886">
    <property type="term" value="C:plasma membrane"/>
    <property type="evidence" value="ECO:0007669"/>
    <property type="project" value="UniProtKB-SubCell"/>
</dbReference>
<dbReference type="GO" id="GO:0071916">
    <property type="term" value="F:dipeptide transmembrane transporter activity"/>
    <property type="evidence" value="ECO:0007669"/>
    <property type="project" value="TreeGrafter"/>
</dbReference>
<dbReference type="GO" id="GO:0015031">
    <property type="term" value="P:protein transport"/>
    <property type="evidence" value="ECO:0007669"/>
    <property type="project" value="UniProtKB-KW"/>
</dbReference>
<dbReference type="CDD" id="cd06261">
    <property type="entry name" value="TM_PBP2"/>
    <property type="match status" value="1"/>
</dbReference>
<dbReference type="Gene3D" id="1.10.3720.10">
    <property type="entry name" value="MetI-like"/>
    <property type="match status" value="1"/>
</dbReference>
<dbReference type="InterPro" id="IPR045621">
    <property type="entry name" value="BPD_transp_1_N"/>
</dbReference>
<dbReference type="InterPro" id="IPR000515">
    <property type="entry name" value="MetI-like"/>
</dbReference>
<dbReference type="InterPro" id="IPR035906">
    <property type="entry name" value="MetI-like_sf"/>
</dbReference>
<dbReference type="NCBIfam" id="NF008161">
    <property type="entry name" value="PRK10914.1"/>
    <property type="match status" value="1"/>
</dbReference>
<dbReference type="PANTHER" id="PTHR43163">
    <property type="entry name" value="DIPEPTIDE TRANSPORT SYSTEM PERMEASE PROTEIN DPPB-RELATED"/>
    <property type="match status" value="1"/>
</dbReference>
<dbReference type="PANTHER" id="PTHR43163:SF6">
    <property type="entry name" value="DIPEPTIDE TRANSPORT SYSTEM PERMEASE PROTEIN DPPB-RELATED"/>
    <property type="match status" value="1"/>
</dbReference>
<dbReference type="Pfam" id="PF00528">
    <property type="entry name" value="BPD_transp_1"/>
    <property type="match status" value="1"/>
</dbReference>
<dbReference type="Pfam" id="PF19300">
    <property type="entry name" value="BPD_transp_1_N"/>
    <property type="match status" value="1"/>
</dbReference>
<dbReference type="SUPFAM" id="SSF161098">
    <property type="entry name" value="MetI-like"/>
    <property type="match status" value="1"/>
</dbReference>
<dbReference type="PROSITE" id="PS50928">
    <property type="entry name" value="ABC_TM1"/>
    <property type="match status" value="1"/>
</dbReference>
<gene>
    <name type="primary">dppB</name>
    <name type="ordered locus">c4358</name>
</gene>
<protein>
    <recommendedName>
        <fullName evidence="1">Dipeptide transport system permease protein DppB</fullName>
    </recommendedName>
</protein>